<dbReference type="EC" id="6.3.4.22"/>
<dbReference type="EMBL" id="AE000782">
    <property type="protein sequence ID" value="AAB88990.1"/>
    <property type="molecule type" value="Genomic_DNA"/>
</dbReference>
<dbReference type="PIR" id="C69532">
    <property type="entry name" value="C69532"/>
</dbReference>
<dbReference type="RefSeq" id="WP_010879748.1">
    <property type="nucleotide sequence ID" value="NC_000917.1"/>
</dbReference>
<dbReference type="PDB" id="3AMT">
    <property type="method" value="X-ray"/>
    <property type="resolution" value="2.90 A"/>
    <property type="chains" value="A=1-420"/>
</dbReference>
<dbReference type="PDB" id="3AMU">
    <property type="method" value="X-ray"/>
    <property type="resolution" value="3.10 A"/>
    <property type="chains" value="A=1-420"/>
</dbReference>
<dbReference type="PDB" id="3AU7">
    <property type="method" value="X-ray"/>
    <property type="resolution" value="2.60 A"/>
    <property type="chains" value="A=1-343, A=386-420"/>
</dbReference>
<dbReference type="PDB" id="4RVZ">
    <property type="method" value="X-ray"/>
    <property type="resolution" value="2.90 A"/>
    <property type="chains" value="Z=1-420"/>
</dbReference>
<dbReference type="PDB" id="5XOB">
    <property type="method" value="X-ray"/>
    <property type="resolution" value="2.48 A"/>
    <property type="chains" value="Z=1-420"/>
</dbReference>
<dbReference type="PDB" id="6AGG">
    <property type="method" value="X-ray"/>
    <property type="resolution" value="2.71 A"/>
    <property type="chains" value="Z=1-420"/>
</dbReference>
<dbReference type="PDBsum" id="3AMT"/>
<dbReference type="PDBsum" id="3AMU"/>
<dbReference type="PDBsum" id="3AU7"/>
<dbReference type="PDBsum" id="4RVZ"/>
<dbReference type="PDBsum" id="5XOB"/>
<dbReference type="PDBsum" id="6AGG"/>
<dbReference type="SMR" id="O28025"/>
<dbReference type="STRING" id="224325.AF_2259"/>
<dbReference type="PaxDb" id="224325-AF_2259"/>
<dbReference type="EnsemblBacteria" id="AAB88990">
    <property type="protein sequence ID" value="AAB88990"/>
    <property type="gene ID" value="AF_2259"/>
</dbReference>
<dbReference type="GeneID" id="24796023"/>
<dbReference type="KEGG" id="afu:AF_2259"/>
<dbReference type="eggNOG" id="arCOG01115">
    <property type="taxonomic scope" value="Archaea"/>
</dbReference>
<dbReference type="HOGENOM" id="CLU_675459_0_0_2"/>
<dbReference type="OrthoDB" id="39189at2157"/>
<dbReference type="PhylomeDB" id="O28025"/>
<dbReference type="BRENDA" id="6.3.4.22">
    <property type="organism ID" value="414"/>
</dbReference>
<dbReference type="EvolutionaryTrace" id="O28025"/>
<dbReference type="Proteomes" id="UP000002199">
    <property type="component" value="Chromosome"/>
</dbReference>
<dbReference type="GO" id="GO:0005737">
    <property type="term" value="C:cytoplasm"/>
    <property type="evidence" value="ECO:0007669"/>
    <property type="project" value="UniProtKB-SubCell"/>
</dbReference>
<dbReference type="GO" id="GO:0005524">
    <property type="term" value="F:ATP binding"/>
    <property type="evidence" value="ECO:0007669"/>
    <property type="project" value="UniProtKB-KW"/>
</dbReference>
<dbReference type="GO" id="GO:0016879">
    <property type="term" value="F:ligase activity, forming carbon-nitrogen bonds"/>
    <property type="evidence" value="ECO:0000314"/>
    <property type="project" value="UniProtKB"/>
</dbReference>
<dbReference type="GO" id="GO:0003676">
    <property type="term" value="F:nucleic acid binding"/>
    <property type="evidence" value="ECO:0007669"/>
    <property type="project" value="InterPro"/>
</dbReference>
<dbReference type="GO" id="GO:0002101">
    <property type="term" value="P:tRNA wobble cytosine modification"/>
    <property type="evidence" value="ECO:0000314"/>
    <property type="project" value="UniProtKB"/>
</dbReference>
<dbReference type="CDD" id="cd04482">
    <property type="entry name" value="RPA2_OBF_like"/>
    <property type="match status" value="1"/>
</dbReference>
<dbReference type="Gene3D" id="2.40.50.1010">
    <property type="match status" value="1"/>
</dbReference>
<dbReference type="Gene3D" id="3.30.70.2200">
    <property type="match status" value="1"/>
</dbReference>
<dbReference type="Gene3D" id="3.90.600.20">
    <property type="match status" value="1"/>
</dbReference>
<dbReference type="HAMAP" id="MF_01892">
    <property type="entry name" value="tRNA_Ile2_agm2C_synt"/>
    <property type="match status" value="1"/>
</dbReference>
<dbReference type="InterPro" id="IPR004365">
    <property type="entry name" value="NA-bd_OB_tRNA"/>
</dbReference>
<dbReference type="InterPro" id="IPR053434">
    <property type="entry name" value="TiaS"/>
</dbReference>
<dbReference type="InterPro" id="IPR053870">
    <property type="entry name" value="TiaS-like_TCKD"/>
</dbReference>
<dbReference type="InterPro" id="IPR013696">
    <property type="entry name" value="TiaS_FLD"/>
</dbReference>
<dbReference type="InterPro" id="IPR024913">
    <property type="entry name" value="tRNA_Ile2__agm2C_synt"/>
</dbReference>
<dbReference type="InterPro" id="IPR055394">
    <property type="entry name" value="Zn_ribbon_TiaS"/>
</dbReference>
<dbReference type="NCBIfam" id="NF040849">
    <property type="entry name" value="tRNAmod_TiaS"/>
    <property type="match status" value="1"/>
</dbReference>
<dbReference type="PANTHER" id="PTHR40705">
    <property type="entry name" value="TRNA(ILE2) 2-AGMATINYLCYTIDINE SYNTHETASE TIAS"/>
    <property type="match status" value="1"/>
</dbReference>
<dbReference type="PANTHER" id="PTHR40705:SF1">
    <property type="entry name" value="TRNA(ILE2) 2-AGMATINYLCYTIDINE SYNTHETASE TIAS"/>
    <property type="match status" value="1"/>
</dbReference>
<dbReference type="Pfam" id="PF08489">
    <property type="entry name" value="TiaS_FLD"/>
    <property type="match status" value="1"/>
</dbReference>
<dbReference type="Pfam" id="PF22641">
    <property type="entry name" value="TiaS_TCKD"/>
    <property type="match status" value="1"/>
</dbReference>
<dbReference type="Pfam" id="PF01336">
    <property type="entry name" value="tRNA_anti-codon"/>
    <property type="match status" value="1"/>
</dbReference>
<dbReference type="Pfam" id="PF23783">
    <property type="entry name" value="Zn_ribbon_TiaS"/>
    <property type="match status" value="1"/>
</dbReference>
<sequence>MRVWVGIDDTDSSRGMCTTYLAVLAMERVERELGKVIGFPRLIRLNPTIPYKTRGNGAVSFLVEVDDVGELVDVVNEVIIEHAMLDDEKTNPGAVFVDEELAVKLKPFADKAIKDVLQIDEALFVIGKYFIPHLRHKKGRGLIGALAAVGAELEDFTLELIAYRYPERFGTEREYDEESFFDMDYELYPQTFDNVDWCNDVVVCIPNTPCPVLYGIRGESVEALYKAMESVKTEPVDRRMIFVTNHATDMHLIGEEEVHRLENYRSYRLRGRVTLEPYDIEGGHVFFEIDTKFGSVKCAAFEPTKQFRNVIRLLRKGDVVEVYGSMKKDTINLEKIQIVELAEIWVEKNPICPSCGRRMESAGRGQGFRCKKCRTKADEKLREKVERELQPGFYEVPPSARRHLSKPLIRMNVEGRHIFR</sequence>
<comment type="function">
    <text evidence="1">ATP-dependent agmatine transferase that catalyzes the formation of 2-agmatinylcytidine (agm2C) at the wobble position (C34) of tRNA(Ile2), converting the codon specificity from AUG to AUA.</text>
</comment>
<comment type="catalytic activity">
    <reaction evidence="1">
        <text>cytidine(34) in tRNA(Ile2) + agmatine + ATP + H2O = 2-agmatinylcytidine(34) in tRNA(Ile2) + AMP + 2 phosphate + 2 H(+)</text>
        <dbReference type="Rhea" id="RHEA:43608"/>
        <dbReference type="Rhea" id="RHEA-COMP:10625"/>
        <dbReference type="Rhea" id="RHEA-COMP:10626"/>
        <dbReference type="ChEBI" id="CHEBI:15377"/>
        <dbReference type="ChEBI" id="CHEBI:15378"/>
        <dbReference type="ChEBI" id="CHEBI:30616"/>
        <dbReference type="ChEBI" id="CHEBI:43474"/>
        <dbReference type="ChEBI" id="CHEBI:58145"/>
        <dbReference type="ChEBI" id="CHEBI:82748"/>
        <dbReference type="ChEBI" id="CHEBI:83545"/>
        <dbReference type="ChEBI" id="CHEBI:456215"/>
        <dbReference type="EC" id="6.3.4.22"/>
    </reaction>
</comment>
<comment type="subcellular location">
    <subcellularLocation>
        <location evidence="2">Cytoplasm</location>
    </subcellularLocation>
</comment>
<comment type="similarity">
    <text evidence="2">Belongs to the TiaS family.</text>
</comment>
<protein>
    <recommendedName>
        <fullName>tRNA(Ile2) 2-agmatinylcytidine synthetase TiaS</fullName>
        <shortName>tRNA(Ile2)-agm2C synthetase</shortName>
        <ecNumber>6.3.4.22</ecNumber>
    </recommendedName>
    <alternativeName>
        <fullName>tRNA(Ile2) agmatidine synthetase</fullName>
    </alternativeName>
</protein>
<evidence type="ECO:0000269" key="1">
    <source>
    </source>
</evidence>
<evidence type="ECO:0000305" key="2"/>
<evidence type="ECO:0007829" key="3">
    <source>
        <dbReference type="PDB" id="3AMT"/>
    </source>
</evidence>
<evidence type="ECO:0007829" key="4">
    <source>
        <dbReference type="PDB" id="3AMU"/>
    </source>
</evidence>
<evidence type="ECO:0007829" key="5">
    <source>
        <dbReference type="PDB" id="4RVZ"/>
    </source>
</evidence>
<evidence type="ECO:0007829" key="6">
    <source>
        <dbReference type="PDB" id="5XOB"/>
    </source>
</evidence>
<evidence type="ECO:0007829" key="7">
    <source>
        <dbReference type="PDB" id="6AGG"/>
    </source>
</evidence>
<accession>O28025</accession>
<keyword id="KW-0002">3D-structure</keyword>
<keyword id="KW-0067">ATP-binding</keyword>
<keyword id="KW-0963">Cytoplasm</keyword>
<keyword id="KW-0436">Ligase</keyword>
<keyword id="KW-0547">Nucleotide-binding</keyword>
<keyword id="KW-1185">Reference proteome</keyword>
<keyword id="KW-0819">tRNA processing</keyword>
<proteinExistence type="evidence at protein level"/>
<name>TIAS_ARCFU</name>
<gene>
    <name type="primary">tiaS</name>
    <name type="ordered locus">AF_2259</name>
</gene>
<reference key="1">
    <citation type="journal article" date="1997" name="Nature">
        <title>The complete genome sequence of the hyperthermophilic, sulphate-reducing archaeon Archaeoglobus fulgidus.</title>
        <authorList>
            <person name="Klenk H.-P."/>
            <person name="Clayton R.A."/>
            <person name="Tomb J.-F."/>
            <person name="White O."/>
            <person name="Nelson K.E."/>
            <person name="Ketchum K.A."/>
            <person name="Dodson R.J."/>
            <person name="Gwinn M.L."/>
            <person name="Hickey E.K."/>
            <person name="Peterson J.D."/>
            <person name="Richardson D.L."/>
            <person name="Kerlavage A.R."/>
            <person name="Graham D.E."/>
            <person name="Kyrpides N.C."/>
            <person name="Fleischmann R.D."/>
            <person name="Quackenbush J."/>
            <person name="Lee N.H."/>
            <person name="Sutton G.G."/>
            <person name="Gill S.R."/>
            <person name="Kirkness E.F."/>
            <person name="Dougherty B.A."/>
            <person name="McKenney K."/>
            <person name="Adams M.D."/>
            <person name="Loftus B.J."/>
            <person name="Peterson S.N."/>
            <person name="Reich C.I."/>
            <person name="McNeil L.K."/>
            <person name="Badger J.H."/>
            <person name="Glodek A."/>
            <person name="Zhou L."/>
            <person name="Overbeek R."/>
            <person name="Gocayne J.D."/>
            <person name="Weidman J.F."/>
            <person name="McDonald L.A."/>
            <person name="Utterback T.R."/>
            <person name="Cotton M.D."/>
            <person name="Spriggs T."/>
            <person name="Artiach P."/>
            <person name="Kaine B.P."/>
            <person name="Sykes S.M."/>
            <person name="Sadow P.W."/>
            <person name="D'Andrea K.P."/>
            <person name="Bowman C."/>
            <person name="Fujii C."/>
            <person name="Garland S.A."/>
            <person name="Mason T.M."/>
            <person name="Olsen G.J."/>
            <person name="Fraser C.M."/>
            <person name="Smith H.O."/>
            <person name="Woese C.R."/>
            <person name="Venter J.C."/>
        </authorList>
    </citation>
    <scope>NUCLEOTIDE SEQUENCE [LARGE SCALE GENOMIC DNA]</scope>
    <source>
        <strain>ATCC 49558 / DSM 4304 / JCM 9628 / NBRC 100126 / VC-16</strain>
    </source>
</reference>
<reference key="2">
    <citation type="journal article" date="2010" name="Nat. Chem. Biol.">
        <title>Agmatine-conjugated cytidine in a tRNA anticodon is essential for AUA decoding in archaea.</title>
        <authorList>
            <person name="Ikeuchi Y."/>
            <person name="Kimura S."/>
            <person name="Numata T."/>
            <person name="Nakamura D."/>
            <person name="Yokogawa T."/>
            <person name="Ogata T."/>
            <person name="Wada T."/>
            <person name="Suzuki T."/>
            <person name="Suzuki T."/>
        </authorList>
    </citation>
    <scope>FUNCTION</scope>
    <scope>CATALYTIC ACTIVITY</scope>
    <scope>MUTAGENESIS OF ARG-140; GLY-141; TYR-163; ARG-164; ARG-217; GLY-218; THR-248; ASP-249; CYS-352 AND CYS-355</scope>
</reference>
<organism>
    <name type="scientific">Archaeoglobus fulgidus (strain ATCC 49558 / DSM 4304 / JCM 9628 / NBRC 100126 / VC-16)</name>
    <dbReference type="NCBI Taxonomy" id="224325"/>
    <lineage>
        <taxon>Archaea</taxon>
        <taxon>Methanobacteriati</taxon>
        <taxon>Methanobacteriota</taxon>
        <taxon>Archaeoglobi</taxon>
        <taxon>Archaeoglobales</taxon>
        <taxon>Archaeoglobaceae</taxon>
        <taxon>Archaeoglobus</taxon>
    </lineage>
</organism>
<feature type="chain" id="PRO_0000407288" description="tRNA(Ile2) 2-agmatinylcytidine synthetase TiaS">
    <location>
        <begin position="1"/>
        <end position="420"/>
    </location>
</feature>
<feature type="DNA-binding region" description="OB">
    <location>
        <begin position="268"/>
        <end position="329"/>
    </location>
</feature>
<feature type="mutagenesis site" description="Loss of activity." evidence="1">
    <original>R</original>
    <variation>A</variation>
    <location>
        <position position="140"/>
    </location>
</feature>
<feature type="mutagenesis site" description="Loss of activity." evidence="1">
    <original>G</original>
    <variation>A</variation>
    <location>
        <position position="141"/>
    </location>
</feature>
<feature type="mutagenesis site" description="Decrease in activity." evidence="1">
    <original>Y</original>
    <variation>A</variation>
    <location>
        <position position="163"/>
    </location>
</feature>
<feature type="mutagenesis site" description="Decrease in activity." evidence="1">
    <original>R</original>
    <variation>A</variation>
    <location>
        <position position="164"/>
    </location>
</feature>
<feature type="mutagenesis site" description="Decrease in activity." evidence="1">
    <original>R</original>
    <variation>A</variation>
    <location>
        <position position="217"/>
    </location>
</feature>
<feature type="mutagenesis site" description="Decrease in activity." evidence="1">
    <original>G</original>
    <variation>A</variation>
    <location>
        <position position="218"/>
    </location>
</feature>
<feature type="mutagenesis site" description="Decrease in activity." evidence="1">
    <original>T</original>
    <variation>A</variation>
    <location>
        <position position="248"/>
    </location>
</feature>
<feature type="mutagenesis site" description="Decrease in activity." evidence="1">
    <original>D</original>
    <variation>A</variation>
    <location>
        <position position="249"/>
    </location>
</feature>
<feature type="mutagenesis site" description="Almost loss of activity." evidence="1">
    <original>C</original>
    <variation>A</variation>
    <location>
        <position position="352"/>
    </location>
</feature>
<feature type="mutagenesis site" description="Almost loss of activity." evidence="1">
    <original>C</original>
    <variation>A</variation>
    <location>
        <position position="355"/>
    </location>
</feature>
<feature type="strand" evidence="6">
    <location>
        <begin position="2"/>
        <end position="8"/>
    </location>
</feature>
<feature type="turn" evidence="6">
    <location>
        <begin position="13"/>
        <end position="15"/>
    </location>
</feature>
<feature type="helix" evidence="6">
    <location>
        <begin position="18"/>
        <end position="32"/>
    </location>
</feature>
<feature type="strand" evidence="6">
    <location>
        <begin position="35"/>
        <end position="44"/>
    </location>
</feature>
<feature type="strand" evidence="3">
    <location>
        <begin position="53"/>
        <end position="55"/>
    </location>
</feature>
<feature type="strand" evidence="6">
    <location>
        <begin position="57"/>
        <end position="64"/>
    </location>
</feature>
<feature type="helix" evidence="6">
    <location>
        <begin position="68"/>
        <end position="82"/>
    </location>
</feature>
<feature type="strand" evidence="7">
    <location>
        <begin position="87"/>
        <end position="89"/>
    </location>
</feature>
<feature type="strand" evidence="6">
    <location>
        <begin position="93"/>
        <end position="98"/>
    </location>
</feature>
<feature type="helix" evidence="6">
    <location>
        <begin position="99"/>
        <end position="102"/>
    </location>
</feature>
<feature type="helix" evidence="6">
    <location>
        <begin position="103"/>
        <end position="105"/>
    </location>
</feature>
<feature type="helix" evidence="6">
    <location>
        <begin position="106"/>
        <end position="114"/>
    </location>
</feature>
<feature type="helix" evidence="6">
    <location>
        <begin position="119"/>
        <end position="129"/>
    </location>
</feature>
<feature type="strand" evidence="6">
    <location>
        <begin position="133"/>
        <end position="139"/>
    </location>
</feature>
<feature type="helix" evidence="6">
    <location>
        <begin position="141"/>
        <end position="150"/>
    </location>
</feature>
<feature type="strand" evidence="6">
    <location>
        <begin position="157"/>
        <end position="163"/>
    </location>
</feature>
<feature type="helix" evidence="6">
    <location>
        <begin position="166"/>
        <end position="168"/>
    </location>
</feature>
<feature type="strand" evidence="3">
    <location>
        <begin position="169"/>
        <end position="171"/>
    </location>
</feature>
<feature type="helix" evidence="6">
    <location>
        <begin position="177"/>
        <end position="187"/>
    </location>
</feature>
<feature type="turn" evidence="5">
    <location>
        <begin position="188"/>
        <end position="190"/>
    </location>
</feature>
<feature type="strand" evidence="6">
    <location>
        <begin position="193"/>
        <end position="196"/>
    </location>
</feature>
<feature type="turn" evidence="6">
    <location>
        <begin position="197"/>
        <end position="200"/>
    </location>
</feature>
<feature type="strand" evidence="5">
    <location>
        <begin position="203"/>
        <end position="205"/>
    </location>
</feature>
<feature type="strand" evidence="6">
    <location>
        <begin position="208"/>
        <end position="219"/>
    </location>
</feature>
<feature type="helix" evidence="6">
    <location>
        <begin position="221"/>
        <end position="230"/>
    </location>
</feature>
<feature type="strand" evidence="6">
    <location>
        <begin position="239"/>
        <end position="244"/>
    </location>
</feature>
<feature type="strand" evidence="6">
    <location>
        <begin position="252"/>
        <end position="254"/>
    </location>
</feature>
<feature type="helix" evidence="6">
    <location>
        <begin position="255"/>
        <end position="257"/>
    </location>
</feature>
<feature type="strand" evidence="6">
    <location>
        <begin position="265"/>
        <end position="273"/>
    </location>
</feature>
<feature type="strand" evidence="6">
    <location>
        <begin position="278"/>
        <end position="280"/>
    </location>
</feature>
<feature type="turn" evidence="6">
    <location>
        <begin position="281"/>
        <end position="283"/>
    </location>
</feature>
<feature type="strand" evidence="6">
    <location>
        <begin position="284"/>
        <end position="291"/>
    </location>
</feature>
<feature type="strand" evidence="6">
    <location>
        <begin position="294"/>
        <end position="300"/>
    </location>
</feature>
<feature type="helix" evidence="6">
    <location>
        <begin position="302"/>
        <end position="306"/>
    </location>
</feature>
<feature type="helix" evidence="6">
    <location>
        <begin position="307"/>
        <end position="313"/>
    </location>
</feature>
<feature type="strand" evidence="6">
    <location>
        <begin position="319"/>
        <end position="327"/>
    </location>
</feature>
<feature type="strand" evidence="6">
    <location>
        <begin position="330"/>
        <end position="338"/>
    </location>
</feature>
<feature type="strand" evidence="6">
    <location>
        <begin position="345"/>
        <end position="348"/>
    </location>
</feature>
<feature type="turn" evidence="6">
    <location>
        <begin position="353"/>
        <end position="355"/>
    </location>
</feature>
<feature type="strand" evidence="3">
    <location>
        <begin position="359"/>
        <end position="361"/>
    </location>
</feature>
<feature type="strand" evidence="6">
    <location>
        <begin position="363"/>
        <end position="366"/>
    </location>
</feature>
<feature type="strand" evidence="6">
    <location>
        <begin position="368"/>
        <end position="370"/>
    </location>
</feature>
<feature type="turn" evidence="6">
    <location>
        <begin position="371"/>
        <end position="374"/>
    </location>
</feature>
<feature type="strand" evidence="6">
    <location>
        <begin position="375"/>
        <end position="377"/>
    </location>
</feature>
<feature type="strand" evidence="6">
    <location>
        <begin position="381"/>
        <end position="384"/>
    </location>
</feature>
<feature type="strand" evidence="6">
    <location>
        <begin position="391"/>
        <end position="395"/>
    </location>
</feature>
<feature type="helix" evidence="6">
    <location>
        <begin position="398"/>
        <end position="400"/>
    </location>
</feature>
<feature type="strand" evidence="4">
    <location>
        <begin position="403"/>
        <end position="405"/>
    </location>
</feature>
<feature type="helix" evidence="6">
    <location>
        <begin position="408"/>
        <end position="410"/>
    </location>
</feature>
<feature type="strand" evidence="6">
    <location>
        <begin position="414"/>
        <end position="417"/>
    </location>
</feature>